<name>Y4029_EMENI</name>
<reference key="1">
    <citation type="journal article" date="2005" name="Nature">
        <title>Sequencing of Aspergillus nidulans and comparative analysis with A. fumigatus and A. oryzae.</title>
        <authorList>
            <person name="Galagan J.E."/>
            <person name="Calvo S.E."/>
            <person name="Cuomo C."/>
            <person name="Ma L.-J."/>
            <person name="Wortman J.R."/>
            <person name="Batzoglou S."/>
            <person name="Lee S.-I."/>
            <person name="Bastuerkmen M."/>
            <person name="Spevak C.C."/>
            <person name="Clutterbuck J."/>
            <person name="Kapitonov V."/>
            <person name="Jurka J."/>
            <person name="Scazzocchio C."/>
            <person name="Farman M.L."/>
            <person name="Butler J."/>
            <person name="Purcell S."/>
            <person name="Harris S."/>
            <person name="Braus G.H."/>
            <person name="Draht O."/>
            <person name="Busch S."/>
            <person name="D'Enfert C."/>
            <person name="Bouchier C."/>
            <person name="Goldman G.H."/>
            <person name="Bell-Pedersen D."/>
            <person name="Griffiths-Jones S."/>
            <person name="Doonan J.H."/>
            <person name="Yu J."/>
            <person name="Vienken K."/>
            <person name="Pain A."/>
            <person name="Freitag M."/>
            <person name="Selker E.U."/>
            <person name="Archer D.B."/>
            <person name="Penalva M.A."/>
            <person name="Oakley B.R."/>
            <person name="Momany M."/>
            <person name="Tanaka T."/>
            <person name="Kumagai T."/>
            <person name="Asai K."/>
            <person name="Machida M."/>
            <person name="Nierman W.C."/>
            <person name="Denning D.W."/>
            <person name="Caddick M.X."/>
            <person name="Hynes M."/>
            <person name="Paoletti M."/>
            <person name="Fischer R."/>
            <person name="Miller B.L."/>
            <person name="Dyer P.S."/>
            <person name="Sachs M.S."/>
            <person name="Osmani S.A."/>
            <person name="Birren B.W."/>
        </authorList>
    </citation>
    <scope>NUCLEOTIDE SEQUENCE [LARGE SCALE GENOMIC DNA]</scope>
    <source>
        <strain>FGSC A4 / ATCC 38163 / CBS 112.46 / NRRL 194 / M139</strain>
    </source>
</reference>
<reference key="2">
    <citation type="journal article" date="2009" name="Fungal Genet. Biol.">
        <title>The 2008 update of the Aspergillus nidulans genome annotation: a community effort.</title>
        <authorList>
            <person name="Wortman J.R."/>
            <person name="Gilsenan J.M."/>
            <person name="Joardar V."/>
            <person name="Deegan J."/>
            <person name="Clutterbuck J."/>
            <person name="Andersen M.R."/>
            <person name="Archer D."/>
            <person name="Bencina M."/>
            <person name="Braus G."/>
            <person name="Coutinho P."/>
            <person name="von Dohren H."/>
            <person name="Doonan J."/>
            <person name="Driessen A.J."/>
            <person name="Durek P."/>
            <person name="Espeso E."/>
            <person name="Fekete E."/>
            <person name="Flipphi M."/>
            <person name="Estrada C.G."/>
            <person name="Geysens S."/>
            <person name="Goldman G."/>
            <person name="de Groot P.W."/>
            <person name="Hansen K."/>
            <person name="Harris S.D."/>
            <person name="Heinekamp T."/>
            <person name="Helmstaedt K."/>
            <person name="Henrissat B."/>
            <person name="Hofmann G."/>
            <person name="Homan T."/>
            <person name="Horio T."/>
            <person name="Horiuchi H."/>
            <person name="James S."/>
            <person name="Jones M."/>
            <person name="Karaffa L."/>
            <person name="Karanyi Z."/>
            <person name="Kato M."/>
            <person name="Keller N."/>
            <person name="Kelly D.E."/>
            <person name="Kiel J.A."/>
            <person name="Kim J.M."/>
            <person name="van der Klei I.J."/>
            <person name="Klis F.M."/>
            <person name="Kovalchuk A."/>
            <person name="Krasevec N."/>
            <person name="Kubicek C.P."/>
            <person name="Liu B."/>
            <person name="Maccabe A."/>
            <person name="Meyer V."/>
            <person name="Mirabito P."/>
            <person name="Miskei M."/>
            <person name="Mos M."/>
            <person name="Mullins J."/>
            <person name="Nelson D.R."/>
            <person name="Nielsen J."/>
            <person name="Oakley B.R."/>
            <person name="Osmani S.A."/>
            <person name="Pakula T."/>
            <person name="Paszewski A."/>
            <person name="Paulsen I."/>
            <person name="Pilsyk S."/>
            <person name="Pocsi I."/>
            <person name="Punt P.J."/>
            <person name="Ram A.F."/>
            <person name="Ren Q."/>
            <person name="Robellet X."/>
            <person name="Robson G."/>
            <person name="Seiboth B."/>
            <person name="van Solingen P."/>
            <person name="Specht T."/>
            <person name="Sun J."/>
            <person name="Taheri-Talesh N."/>
            <person name="Takeshita N."/>
            <person name="Ussery D."/>
            <person name="vanKuyk P.A."/>
            <person name="Visser H."/>
            <person name="van de Vondervoort P.J."/>
            <person name="de Vries R.P."/>
            <person name="Walton J."/>
            <person name="Xiang X."/>
            <person name="Xiong Y."/>
            <person name="Zeng A.P."/>
            <person name="Brandt B.W."/>
            <person name="Cornell M.J."/>
            <person name="van den Hondel C.A."/>
            <person name="Visser J."/>
            <person name="Oliver S.G."/>
            <person name="Turner G."/>
        </authorList>
    </citation>
    <scope>GENOME REANNOTATION</scope>
    <source>
        <strain>FGSC A4 / ATCC 38163 / CBS 112.46 / NRRL 194 / M139</strain>
    </source>
</reference>
<reference key="3">
    <citation type="journal article" date="2007" name="Fungal Genet. Biol.">
        <title>Proteome map of Aspergillus nidulans during osmoadaptation.</title>
        <authorList>
            <person name="Kim Y."/>
            <person name="Nandakumar M.P."/>
            <person name="Marten M.R."/>
        </authorList>
    </citation>
    <scope>INDUCTION</scope>
    <scope>IDENTIFICATION BY MASS SPECTROMETRY</scope>
</reference>
<feature type="chain" id="PRO_0000348273" description="Uncharacterized protein AN4029">
    <location>
        <begin position="1"/>
        <end position="88"/>
    </location>
</feature>
<feature type="region of interest" description="Disordered" evidence="1">
    <location>
        <begin position="1"/>
        <end position="88"/>
    </location>
</feature>
<feature type="compositionally biased region" description="Basic and acidic residues" evidence="1">
    <location>
        <begin position="21"/>
        <end position="65"/>
    </location>
</feature>
<protein>
    <recommendedName>
        <fullName>Uncharacterized protein AN4029</fullName>
    </recommendedName>
</protein>
<accession>Q5B601</accession>
<accession>C8V5N6</accession>
<keyword id="KW-1185">Reference proteome</keyword>
<keyword id="KW-0346">Stress response</keyword>
<gene>
    <name type="ORF">AN4029</name>
</gene>
<comment type="function">
    <text>Involved in osmoadaptation.</text>
</comment>
<comment type="induction">
    <text evidence="2">Up-regulated when grown with elevated levels of potassium chloride.</text>
</comment>
<organism>
    <name type="scientific">Emericella nidulans (strain FGSC A4 / ATCC 38163 / CBS 112.46 / NRRL 194 / M139)</name>
    <name type="common">Aspergillus nidulans</name>
    <dbReference type="NCBI Taxonomy" id="227321"/>
    <lineage>
        <taxon>Eukaryota</taxon>
        <taxon>Fungi</taxon>
        <taxon>Dikarya</taxon>
        <taxon>Ascomycota</taxon>
        <taxon>Pezizomycotina</taxon>
        <taxon>Eurotiomycetes</taxon>
        <taxon>Eurotiomycetidae</taxon>
        <taxon>Eurotiales</taxon>
        <taxon>Aspergillaceae</taxon>
        <taxon>Aspergillus</taxon>
        <taxon>Aspergillus subgen. Nidulantes</taxon>
    </lineage>
</organism>
<proteinExistence type="evidence at protein level"/>
<sequence length="88" mass="9594">MPHLPELSKQEPSANTLVDNYRAKGEDLENSHHNNESRLAEGVHYDRNKAPALQEREKASTEKVNVEGGGASSSMVDNIRRGNPSGVA</sequence>
<evidence type="ECO:0000256" key="1">
    <source>
        <dbReference type="SAM" id="MobiDB-lite"/>
    </source>
</evidence>
<evidence type="ECO:0000269" key="2">
    <source>
    </source>
</evidence>
<dbReference type="EMBL" id="AACD01000065">
    <property type="protein sequence ID" value="EAA59500.1"/>
    <property type="molecule type" value="Genomic_DNA"/>
</dbReference>
<dbReference type="EMBL" id="BN001302">
    <property type="protein sequence ID" value="CBF74853.1"/>
    <property type="molecule type" value="Genomic_DNA"/>
</dbReference>
<dbReference type="RefSeq" id="XP_661633.1">
    <property type="nucleotide sequence ID" value="XM_656541.1"/>
</dbReference>
<dbReference type="SMR" id="Q5B601"/>
<dbReference type="EnsemblFungi" id="CBF74853">
    <property type="protein sequence ID" value="CBF74853"/>
    <property type="gene ID" value="ANIA_04029"/>
</dbReference>
<dbReference type="KEGG" id="ani:ANIA_04029"/>
<dbReference type="VEuPathDB" id="FungiDB:AN4029"/>
<dbReference type="HOGENOM" id="CLU_2469063_0_0_1"/>
<dbReference type="InParanoid" id="Q5B601"/>
<dbReference type="OMA" id="MVERMTG"/>
<dbReference type="OrthoDB" id="4463553at2759"/>
<dbReference type="Proteomes" id="UP000000560">
    <property type="component" value="Chromosome II"/>
</dbReference>
<dbReference type="GO" id="GO:0071470">
    <property type="term" value="P:cellular response to osmotic stress"/>
    <property type="evidence" value="ECO:0000270"/>
    <property type="project" value="AspGD"/>
</dbReference>